<name>GLGS_ECO5E</name>
<reference key="1">
    <citation type="journal article" date="2011" name="Proc. Natl. Acad. Sci. U.S.A.">
        <title>Genomic anatomy of Escherichia coli O157:H7 outbreaks.</title>
        <authorList>
            <person name="Eppinger M."/>
            <person name="Mammel M.K."/>
            <person name="Leclerc J.E."/>
            <person name="Ravel J."/>
            <person name="Cebula T.A."/>
        </authorList>
    </citation>
    <scope>NUCLEOTIDE SEQUENCE [LARGE SCALE GENOMIC DNA]</scope>
    <source>
        <strain>EC4115 / EHEC</strain>
    </source>
</reference>
<comment type="function">
    <text evidence="1">Major determinant of cell surface composition. Negatively regulates motility, adhesion and synthesis of biofilm exopolysaccharides.</text>
</comment>
<comment type="similarity">
    <text evidence="1">Belongs to the GlgS family.</text>
</comment>
<proteinExistence type="inferred from homology"/>
<sequence length="66" mass="7922">MDHSLNSLNNFDFLARSFARMHAEGRPVDILAVTGNMDEEHRTWFCARYAWYCQQMMQTRELELEH</sequence>
<dbReference type="EMBL" id="CP001164">
    <property type="protein sequence ID" value="ACI39238.1"/>
    <property type="molecule type" value="Genomic_DNA"/>
</dbReference>
<dbReference type="RefSeq" id="WP_001296424.1">
    <property type="nucleotide sequence ID" value="NC_011353.1"/>
</dbReference>
<dbReference type="SMR" id="B5YR89"/>
<dbReference type="GeneID" id="75173169"/>
<dbReference type="KEGG" id="ecf:ECH74115_4358"/>
<dbReference type="HOGENOM" id="CLU_185971_0_0_6"/>
<dbReference type="GO" id="GO:1902201">
    <property type="term" value="P:negative regulation of bacterial-type flagellum-dependent cell motility"/>
    <property type="evidence" value="ECO:0007669"/>
    <property type="project" value="UniProtKB-UniRule"/>
</dbReference>
<dbReference type="GO" id="GO:1900191">
    <property type="term" value="P:negative regulation of single-species biofilm formation"/>
    <property type="evidence" value="ECO:0007669"/>
    <property type="project" value="UniProtKB-UniRule"/>
</dbReference>
<dbReference type="FunFam" id="1.20.970.20:FF:000001">
    <property type="entry name" value="Surface composition regulator"/>
    <property type="match status" value="1"/>
</dbReference>
<dbReference type="Gene3D" id="1.20.970.20">
    <property type="entry name" value="Glycogen synthesis protein GlgS"/>
    <property type="match status" value="1"/>
</dbReference>
<dbReference type="HAMAP" id="MF_00525">
    <property type="entry name" value="GlgS"/>
    <property type="match status" value="1"/>
</dbReference>
<dbReference type="InterPro" id="IPR015065">
    <property type="entry name" value="GlgS"/>
</dbReference>
<dbReference type="InterPro" id="IPR036295">
    <property type="entry name" value="GlgS_sf"/>
</dbReference>
<dbReference type="NCBIfam" id="NF002793">
    <property type="entry name" value="PRK02922.1"/>
    <property type="match status" value="1"/>
</dbReference>
<dbReference type="Pfam" id="PF08971">
    <property type="entry name" value="GlgS"/>
    <property type="match status" value="1"/>
</dbReference>
<dbReference type="SUPFAM" id="SSF109747">
    <property type="entry name" value="Glycogen synthesis protein GlgS"/>
    <property type="match status" value="1"/>
</dbReference>
<feature type="chain" id="PRO_1000127735" description="Surface composition regulator">
    <location>
        <begin position="1"/>
        <end position="66"/>
    </location>
</feature>
<protein>
    <recommendedName>
        <fullName evidence="1">Surface composition regulator</fullName>
    </recommendedName>
</protein>
<accession>B5YR89</accession>
<evidence type="ECO:0000255" key="1">
    <source>
        <dbReference type="HAMAP-Rule" id="MF_00525"/>
    </source>
</evidence>
<organism>
    <name type="scientific">Escherichia coli O157:H7 (strain EC4115 / EHEC)</name>
    <dbReference type="NCBI Taxonomy" id="444450"/>
    <lineage>
        <taxon>Bacteria</taxon>
        <taxon>Pseudomonadati</taxon>
        <taxon>Pseudomonadota</taxon>
        <taxon>Gammaproteobacteria</taxon>
        <taxon>Enterobacterales</taxon>
        <taxon>Enterobacteriaceae</taxon>
        <taxon>Escherichia</taxon>
    </lineage>
</organism>
<gene>
    <name evidence="1" type="primary">glgS</name>
    <name type="ordered locus">ECH74115_4358</name>
</gene>